<evidence type="ECO:0000255" key="1">
    <source>
        <dbReference type="HAMAP-Rule" id="MF_00171"/>
    </source>
</evidence>
<accession>Q8Z500</accession>
<gene>
    <name evidence="1" type="primary">truA</name>
    <name type="ordered locus">STY2599</name>
    <name type="ordered locus">t0496</name>
</gene>
<name>TRUA_SALTI</name>
<sequence length="270" mass="30297">MSGQQSSPVYKIALGIEYDGSKYYGWQRQNEVRSVQEKLEKALSQVANEPINVFCAGRTDAGVHGTGQVVHFETTALRKDAAWTLGVNANLPGDIAVRWVKTVPDDFHARFSATARRYRYIIYNHRLRPAVLAKGVTHYYEPLDAERMHRAAQCLLGENDFTSFRAVQCQSRTPWRNVMHINVTRHGPYVVVDIKANAFVHHMVRNIVGSLLEVGAHNQPESWIAELLAARDRTLAAATAKAEGLYLVAVDYPDRFDLPKPPMGPLFLAD</sequence>
<dbReference type="EC" id="5.4.99.12" evidence="1"/>
<dbReference type="EMBL" id="AL513382">
    <property type="protein sequence ID" value="CAD07600.1"/>
    <property type="molecule type" value="Genomic_DNA"/>
</dbReference>
<dbReference type="EMBL" id="AE014613">
    <property type="protein sequence ID" value="AAO68202.1"/>
    <property type="molecule type" value="Genomic_DNA"/>
</dbReference>
<dbReference type="RefSeq" id="NP_456910.1">
    <property type="nucleotide sequence ID" value="NC_003198.1"/>
</dbReference>
<dbReference type="RefSeq" id="WP_000016631.1">
    <property type="nucleotide sequence ID" value="NZ_WSUR01000029.1"/>
</dbReference>
<dbReference type="SMR" id="Q8Z500"/>
<dbReference type="STRING" id="220341.gene:17586497"/>
<dbReference type="KEGG" id="stt:t0496"/>
<dbReference type="KEGG" id="sty:STY2599"/>
<dbReference type="PATRIC" id="fig|220341.7.peg.2632"/>
<dbReference type="eggNOG" id="COG0101">
    <property type="taxonomic scope" value="Bacteria"/>
</dbReference>
<dbReference type="HOGENOM" id="CLU_014673_0_2_6"/>
<dbReference type="OMA" id="ADAFCHN"/>
<dbReference type="OrthoDB" id="9811823at2"/>
<dbReference type="Proteomes" id="UP000000541">
    <property type="component" value="Chromosome"/>
</dbReference>
<dbReference type="Proteomes" id="UP000002670">
    <property type="component" value="Chromosome"/>
</dbReference>
<dbReference type="GO" id="GO:0003723">
    <property type="term" value="F:RNA binding"/>
    <property type="evidence" value="ECO:0007669"/>
    <property type="project" value="InterPro"/>
</dbReference>
<dbReference type="GO" id="GO:0160147">
    <property type="term" value="F:tRNA pseudouridine(38-40) synthase activity"/>
    <property type="evidence" value="ECO:0007669"/>
    <property type="project" value="UniProtKB-EC"/>
</dbReference>
<dbReference type="GO" id="GO:0031119">
    <property type="term" value="P:tRNA pseudouridine synthesis"/>
    <property type="evidence" value="ECO:0007669"/>
    <property type="project" value="UniProtKB-UniRule"/>
</dbReference>
<dbReference type="CDD" id="cd02570">
    <property type="entry name" value="PseudoU_synth_EcTruA"/>
    <property type="match status" value="1"/>
</dbReference>
<dbReference type="FunFam" id="3.30.70.580:FF:000001">
    <property type="entry name" value="tRNA pseudouridine synthase A"/>
    <property type="match status" value="1"/>
</dbReference>
<dbReference type="FunFam" id="3.30.70.660:FF:000001">
    <property type="entry name" value="tRNA pseudouridine synthase A"/>
    <property type="match status" value="1"/>
</dbReference>
<dbReference type="Gene3D" id="3.30.70.660">
    <property type="entry name" value="Pseudouridine synthase I, catalytic domain, C-terminal subdomain"/>
    <property type="match status" value="1"/>
</dbReference>
<dbReference type="Gene3D" id="3.30.70.580">
    <property type="entry name" value="Pseudouridine synthase I, catalytic domain, N-terminal subdomain"/>
    <property type="match status" value="1"/>
</dbReference>
<dbReference type="HAMAP" id="MF_00171">
    <property type="entry name" value="TruA"/>
    <property type="match status" value="1"/>
</dbReference>
<dbReference type="InterPro" id="IPR020103">
    <property type="entry name" value="PsdUridine_synth_cat_dom_sf"/>
</dbReference>
<dbReference type="InterPro" id="IPR001406">
    <property type="entry name" value="PsdUridine_synth_TruA"/>
</dbReference>
<dbReference type="InterPro" id="IPR020097">
    <property type="entry name" value="PsdUridine_synth_TruA_a/b_dom"/>
</dbReference>
<dbReference type="InterPro" id="IPR020095">
    <property type="entry name" value="PsdUridine_synth_TruA_C"/>
</dbReference>
<dbReference type="InterPro" id="IPR020094">
    <property type="entry name" value="TruA/RsuA/RluB/E/F_N"/>
</dbReference>
<dbReference type="NCBIfam" id="TIGR00071">
    <property type="entry name" value="hisT_truA"/>
    <property type="match status" value="1"/>
</dbReference>
<dbReference type="PANTHER" id="PTHR11142">
    <property type="entry name" value="PSEUDOURIDYLATE SYNTHASE"/>
    <property type="match status" value="1"/>
</dbReference>
<dbReference type="PANTHER" id="PTHR11142:SF0">
    <property type="entry name" value="TRNA PSEUDOURIDINE SYNTHASE-LIKE 1"/>
    <property type="match status" value="1"/>
</dbReference>
<dbReference type="Pfam" id="PF01416">
    <property type="entry name" value="PseudoU_synth_1"/>
    <property type="match status" value="2"/>
</dbReference>
<dbReference type="PIRSF" id="PIRSF001430">
    <property type="entry name" value="tRNA_psdUrid_synth"/>
    <property type="match status" value="1"/>
</dbReference>
<dbReference type="SUPFAM" id="SSF55120">
    <property type="entry name" value="Pseudouridine synthase"/>
    <property type="match status" value="1"/>
</dbReference>
<comment type="function">
    <text evidence="1">Formation of pseudouridine at positions 38, 39 and 40 in the anticodon stem and loop of transfer RNAs.</text>
</comment>
<comment type="catalytic activity">
    <reaction evidence="1">
        <text>uridine(38/39/40) in tRNA = pseudouridine(38/39/40) in tRNA</text>
        <dbReference type="Rhea" id="RHEA:22376"/>
        <dbReference type="Rhea" id="RHEA-COMP:10085"/>
        <dbReference type="Rhea" id="RHEA-COMP:10087"/>
        <dbReference type="ChEBI" id="CHEBI:65314"/>
        <dbReference type="ChEBI" id="CHEBI:65315"/>
        <dbReference type="EC" id="5.4.99.12"/>
    </reaction>
</comment>
<comment type="subunit">
    <text evidence="1">Homodimer.</text>
</comment>
<comment type="similarity">
    <text evidence="1">Belongs to the tRNA pseudouridine synthase TruA family.</text>
</comment>
<organism>
    <name type="scientific">Salmonella typhi</name>
    <dbReference type="NCBI Taxonomy" id="90370"/>
    <lineage>
        <taxon>Bacteria</taxon>
        <taxon>Pseudomonadati</taxon>
        <taxon>Pseudomonadota</taxon>
        <taxon>Gammaproteobacteria</taxon>
        <taxon>Enterobacterales</taxon>
        <taxon>Enterobacteriaceae</taxon>
        <taxon>Salmonella</taxon>
    </lineage>
</organism>
<proteinExistence type="inferred from homology"/>
<keyword id="KW-0413">Isomerase</keyword>
<keyword id="KW-0819">tRNA processing</keyword>
<protein>
    <recommendedName>
        <fullName evidence="1">tRNA pseudouridine synthase A</fullName>
        <ecNumber evidence="1">5.4.99.12</ecNumber>
    </recommendedName>
    <alternativeName>
        <fullName evidence="1">tRNA pseudouridine(38-40) synthase</fullName>
    </alternativeName>
    <alternativeName>
        <fullName evidence="1">tRNA pseudouridylate synthase I</fullName>
    </alternativeName>
    <alternativeName>
        <fullName evidence="1">tRNA-uridine isomerase I</fullName>
    </alternativeName>
</protein>
<feature type="chain" id="PRO_0000057444" description="tRNA pseudouridine synthase A">
    <location>
        <begin position="1"/>
        <end position="270"/>
    </location>
</feature>
<feature type="active site" description="Nucleophile" evidence="1">
    <location>
        <position position="60"/>
    </location>
</feature>
<feature type="binding site" evidence="1">
    <location>
        <position position="118"/>
    </location>
    <ligand>
        <name>substrate</name>
    </ligand>
</feature>
<reference key="1">
    <citation type="journal article" date="2001" name="Nature">
        <title>Complete genome sequence of a multiple drug resistant Salmonella enterica serovar Typhi CT18.</title>
        <authorList>
            <person name="Parkhill J."/>
            <person name="Dougan G."/>
            <person name="James K.D."/>
            <person name="Thomson N.R."/>
            <person name="Pickard D."/>
            <person name="Wain J."/>
            <person name="Churcher C.M."/>
            <person name="Mungall K.L."/>
            <person name="Bentley S.D."/>
            <person name="Holden M.T.G."/>
            <person name="Sebaihia M."/>
            <person name="Baker S."/>
            <person name="Basham D."/>
            <person name="Brooks K."/>
            <person name="Chillingworth T."/>
            <person name="Connerton P."/>
            <person name="Cronin A."/>
            <person name="Davis P."/>
            <person name="Davies R.M."/>
            <person name="Dowd L."/>
            <person name="White N."/>
            <person name="Farrar J."/>
            <person name="Feltwell T."/>
            <person name="Hamlin N."/>
            <person name="Haque A."/>
            <person name="Hien T.T."/>
            <person name="Holroyd S."/>
            <person name="Jagels K."/>
            <person name="Krogh A."/>
            <person name="Larsen T.S."/>
            <person name="Leather S."/>
            <person name="Moule S."/>
            <person name="O'Gaora P."/>
            <person name="Parry C."/>
            <person name="Quail M.A."/>
            <person name="Rutherford K.M."/>
            <person name="Simmonds M."/>
            <person name="Skelton J."/>
            <person name="Stevens K."/>
            <person name="Whitehead S."/>
            <person name="Barrell B.G."/>
        </authorList>
    </citation>
    <scope>NUCLEOTIDE SEQUENCE [LARGE SCALE GENOMIC DNA]</scope>
    <source>
        <strain>CT18</strain>
    </source>
</reference>
<reference key="2">
    <citation type="journal article" date="2003" name="J. Bacteriol.">
        <title>Comparative genomics of Salmonella enterica serovar Typhi strains Ty2 and CT18.</title>
        <authorList>
            <person name="Deng W."/>
            <person name="Liou S.-R."/>
            <person name="Plunkett G. III"/>
            <person name="Mayhew G.F."/>
            <person name="Rose D.J."/>
            <person name="Burland V."/>
            <person name="Kodoyianni V."/>
            <person name="Schwartz D.C."/>
            <person name="Blattner F.R."/>
        </authorList>
    </citation>
    <scope>NUCLEOTIDE SEQUENCE [LARGE SCALE GENOMIC DNA]</scope>
    <source>
        <strain>ATCC 700931 / Ty2</strain>
    </source>
</reference>